<feature type="chain" id="PRO_1000098156" description="6,7-dimethyl-8-ribityllumazine synthase">
    <location>
        <begin position="1"/>
        <end position="156"/>
    </location>
</feature>
<feature type="active site" description="Proton donor" evidence="1">
    <location>
        <position position="91"/>
    </location>
</feature>
<feature type="binding site" evidence="1">
    <location>
        <position position="25"/>
    </location>
    <ligand>
        <name>5-amino-6-(D-ribitylamino)uracil</name>
        <dbReference type="ChEBI" id="CHEBI:15934"/>
    </ligand>
</feature>
<feature type="binding site" evidence="1">
    <location>
        <begin position="59"/>
        <end position="61"/>
    </location>
    <ligand>
        <name>5-amino-6-(D-ribitylamino)uracil</name>
        <dbReference type="ChEBI" id="CHEBI:15934"/>
    </ligand>
</feature>
<feature type="binding site" evidence="1">
    <location>
        <begin position="83"/>
        <end position="85"/>
    </location>
    <ligand>
        <name>5-amino-6-(D-ribitylamino)uracil</name>
        <dbReference type="ChEBI" id="CHEBI:15934"/>
    </ligand>
</feature>
<feature type="binding site" evidence="1">
    <location>
        <begin position="88"/>
        <end position="89"/>
    </location>
    <ligand>
        <name>(2S)-2-hydroxy-3-oxobutyl phosphate</name>
        <dbReference type="ChEBI" id="CHEBI:58830"/>
    </ligand>
</feature>
<feature type="binding site" evidence="1">
    <location>
        <position position="116"/>
    </location>
    <ligand>
        <name>5-amino-6-(D-ribitylamino)uracil</name>
        <dbReference type="ChEBI" id="CHEBI:15934"/>
    </ligand>
</feature>
<feature type="binding site" evidence="1">
    <location>
        <position position="130"/>
    </location>
    <ligand>
        <name>(2S)-2-hydroxy-3-oxobutyl phosphate</name>
        <dbReference type="ChEBI" id="CHEBI:58830"/>
    </ligand>
</feature>
<proteinExistence type="inferred from homology"/>
<reference key="1">
    <citation type="journal article" date="2008" name="PLoS ONE">
        <title>Comparative analysis of Acinetobacters: three genomes for three lifestyles.</title>
        <authorList>
            <person name="Vallenet D."/>
            <person name="Nordmann P."/>
            <person name="Barbe V."/>
            <person name="Poirel L."/>
            <person name="Mangenot S."/>
            <person name="Bataille E."/>
            <person name="Dossat C."/>
            <person name="Gas S."/>
            <person name="Kreimeyer A."/>
            <person name="Lenoble P."/>
            <person name="Oztas S."/>
            <person name="Poulain J."/>
            <person name="Segurens B."/>
            <person name="Robert C."/>
            <person name="Abergel C."/>
            <person name="Claverie J.-M."/>
            <person name="Raoult D."/>
            <person name="Medigue C."/>
            <person name="Weissenbach J."/>
            <person name="Cruveiller S."/>
        </authorList>
    </citation>
    <scope>NUCLEOTIDE SEQUENCE [LARGE SCALE GENOMIC DNA]</scope>
    <source>
        <strain>AYE</strain>
    </source>
</reference>
<organism>
    <name type="scientific">Acinetobacter baumannii (strain AYE)</name>
    <dbReference type="NCBI Taxonomy" id="509173"/>
    <lineage>
        <taxon>Bacteria</taxon>
        <taxon>Pseudomonadati</taxon>
        <taxon>Pseudomonadota</taxon>
        <taxon>Gammaproteobacteria</taxon>
        <taxon>Moraxellales</taxon>
        <taxon>Moraxellaceae</taxon>
        <taxon>Acinetobacter</taxon>
        <taxon>Acinetobacter calcoaceticus/baumannii complex</taxon>
    </lineage>
</organism>
<dbReference type="EC" id="2.5.1.78" evidence="1"/>
<dbReference type="EMBL" id="CU459141">
    <property type="protein sequence ID" value="CAM85082.1"/>
    <property type="molecule type" value="Genomic_DNA"/>
</dbReference>
<dbReference type="SMR" id="B0V9X5"/>
<dbReference type="EnsemblBacteria" id="CAM85082">
    <property type="protein sequence ID" value="CAM85082"/>
    <property type="gene ID" value="ABAYE0095"/>
</dbReference>
<dbReference type="KEGG" id="aby:ABAYE0095"/>
<dbReference type="HOGENOM" id="CLU_089358_1_1_6"/>
<dbReference type="UniPathway" id="UPA00275">
    <property type="reaction ID" value="UER00404"/>
</dbReference>
<dbReference type="GO" id="GO:0005829">
    <property type="term" value="C:cytosol"/>
    <property type="evidence" value="ECO:0007669"/>
    <property type="project" value="TreeGrafter"/>
</dbReference>
<dbReference type="GO" id="GO:0009349">
    <property type="term" value="C:riboflavin synthase complex"/>
    <property type="evidence" value="ECO:0007669"/>
    <property type="project" value="InterPro"/>
</dbReference>
<dbReference type="GO" id="GO:0000906">
    <property type="term" value="F:6,7-dimethyl-8-ribityllumazine synthase activity"/>
    <property type="evidence" value="ECO:0007669"/>
    <property type="project" value="UniProtKB-UniRule"/>
</dbReference>
<dbReference type="GO" id="GO:0009231">
    <property type="term" value="P:riboflavin biosynthetic process"/>
    <property type="evidence" value="ECO:0007669"/>
    <property type="project" value="UniProtKB-UniRule"/>
</dbReference>
<dbReference type="CDD" id="cd09209">
    <property type="entry name" value="Lumazine_synthase-I"/>
    <property type="match status" value="1"/>
</dbReference>
<dbReference type="FunFam" id="3.40.50.960:FF:000001">
    <property type="entry name" value="6,7-dimethyl-8-ribityllumazine synthase"/>
    <property type="match status" value="1"/>
</dbReference>
<dbReference type="Gene3D" id="3.40.50.960">
    <property type="entry name" value="Lumazine/riboflavin synthase"/>
    <property type="match status" value="1"/>
</dbReference>
<dbReference type="HAMAP" id="MF_00178">
    <property type="entry name" value="Lumazine_synth"/>
    <property type="match status" value="1"/>
</dbReference>
<dbReference type="InterPro" id="IPR034964">
    <property type="entry name" value="LS"/>
</dbReference>
<dbReference type="InterPro" id="IPR002180">
    <property type="entry name" value="LS/RS"/>
</dbReference>
<dbReference type="InterPro" id="IPR036467">
    <property type="entry name" value="LS/RS_sf"/>
</dbReference>
<dbReference type="NCBIfam" id="TIGR00114">
    <property type="entry name" value="lumazine-synth"/>
    <property type="match status" value="1"/>
</dbReference>
<dbReference type="NCBIfam" id="NF000812">
    <property type="entry name" value="PRK00061.1-4"/>
    <property type="match status" value="1"/>
</dbReference>
<dbReference type="PANTHER" id="PTHR21058:SF0">
    <property type="entry name" value="6,7-DIMETHYL-8-RIBITYLLUMAZINE SYNTHASE"/>
    <property type="match status" value="1"/>
</dbReference>
<dbReference type="PANTHER" id="PTHR21058">
    <property type="entry name" value="6,7-DIMETHYL-8-RIBITYLLUMAZINE SYNTHASE DMRL SYNTHASE LUMAZINE SYNTHASE"/>
    <property type="match status" value="1"/>
</dbReference>
<dbReference type="Pfam" id="PF00885">
    <property type="entry name" value="DMRL_synthase"/>
    <property type="match status" value="1"/>
</dbReference>
<dbReference type="SUPFAM" id="SSF52121">
    <property type="entry name" value="Lumazine synthase"/>
    <property type="match status" value="1"/>
</dbReference>
<accession>B0V9X5</accession>
<keyword id="KW-0686">Riboflavin biosynthesis</keyword>
<keyword id="KW-0808">Transferase</keyword>
<protein>
    <recommendedName>
        <fullName evidence="1">6,7-dimethyl-8-ribityllumazine synthase</fullName>
        <shortName evidence="1">DMRL synthase</shortName>
        <shortName evidence="1">LS</shortName>
        <shortName evidence="1">Lumazine synthase</shortName>
        <ecNumber evidence="1">2.5.1.78</ecNumber>
    </recommendedName>
</protein>
<gene>
    <name evidence="1" type="primary">ribH</name>
    <name type="ordered locus">ABAYE0095</name>
</gene>
<sequence>MAIRRIEGLLHLASEGRYAILVGRFNSFVVEHLLEGAIDTLKRHGVNEDNITVIHAPGAWELPIVAKKLATSNQFDAIIALGAVIRGSTPHFDFVAGECAKGLGVVALESSLPVINGVLTTDSIEQAIERSGTKAGNKGSEAALTAIEMVNLLKAI</sequence>
<name>RISB_ACIBY</name>
<comment type="function">
    <text evidence="1">Catalyzes the formation of 6,7-dimethyl-8-ribityllumazine by condensation of 5-amino-6-(D-ribitylamino)uracil with 3,4-dihydroxy-2-butanone 4-phosphate. This is the penultimate step in the biosynthesis of riboflavin.</text>
</comment>
<comment type="catalytic activity">
    <reaction evidence="1">
        <text>(2S)-2-hydroxy-3-oxobutyl phosphate + 5-amino-6-(D-ribitylamino)uracil = 6,7-dimethyl-8-(1-D-ribityl)lumazine + phosphate + 2 H2O + H(+)</text>
        <dbReference type="Rhea" id="RHEA:26152"/>
        <dbReference type="ChEBI" id="CHEBI:15377"/>
        <dbReference type="ChEBI" id="CHEBI:15378"/>
        <dbReference type="ChEBI" id="CHEBI:15934"/>
        <dbReference type="ChEBI" id="CHEBI:43474"/>
        <dbReference type="ChEBI" id="CHEBI:58201"/>
        <dbReference type="ChEBI" id="CHEBI:58830"/>
        <dbReference type="EC" id="2.5.1.78"/>
    </reaction>
</comment>
<comment type="pathway">
    <text evidence="1">Cofactor biosynthesis; riboflavin biosynthesis; riboflavin from 2-hydroxy-3-oxobutyl phosphate and 5-amino-6-(D-ribitylamino)uracil: step 1/2.</text>
</comment>
<comment type="subunit">
    <text evidence="1">Forms an icosahedral capsid composed of 60 subunits, arranged as a dodecamer of pentamers.</text>
</comment>
<comment type="similarity">
    <text evidence="1">Belongs to the DMRL synthase family.</text>
</comment>
<evidence type="ECO:0000255" key="1">
    <source>
        <dbReference type="HAMAP-Rule" id="MF_00178"/>
    </source>
</evidence>